<geneLocation type="chloroplast"/>
<accession>Q9MUJ9</accession>
<comment type="function">
    <text>PsaA and PsaB bind P700, the primary electron donor of photosystem I (PSI), as well as the electron acceptors A0, A1 and FX. PSI is a plastocyanin-ferredoxin oxidoreductase, converting photonic excitation into a charge separation, which transfers an electron from the donor P700 chlorophyll pair to the spectroscopically characterized acceptors A0, A1, FX, FA and FB in turn. Oxidized P700 is reduced on the lumenal side of the thylakoid membrane by plastocyanin.</text>
</comment>
<comment type="catalytic activity">
    <reaction evidence="1">
        <text>reduced [plastocyanin] + hnu + oxidized [2Fe-2S]-[ferredoxin] = oxidized [plastocyanin] + reduced [2Fe-2S]-[ferredoxin]</text>
        <dbReference type="Rhea" id="RHEA:30407"/>
        <dbReference type="Rhea" id="RHEA-COMP:10000"/>
        <dbReference type="Rhea" id="RHEA-COMP:10001"/>
        <dbReference type="Rhea" id="RHEA-COMP:10039"/>
        <dbReference type="Rhea" id="RHEA-COMP:10040"/>
        <dbReference type="ChEBI" id="CHEBI:29036"/>
        <dbReference type="ChEBI" id="CHEBI:30212"/>
        <dbReference type="ChEBI" id="CHEBI:33737"/>
        <dbReference type="ChEBI" id="CHEBI:33738"/>
        <dbReference type="ChEBI" id="CHEBI:49552"/>
        <dbReference type="EC" id="1.97.1.12"/>
    </reaction>
</comment>
<comment type="cofactor">
    <text evidence="1">P700 is a chlorophyll a/chlorophyll a' dimer, A0 is one or more chlorophyll a, A1 is one or both phylloquinones and FX is a shared 4Fe-4S iron-sulfur center.</text>
</comment>
<comment type="subunit">
    <text evidence="1">The PsaA/B heterodimer binds the P700 chlorophyll special pair and subsequent electron acceptors. PSI consists of a core antenna complex that captures photons, and an electron transfer chain that converts photonic excitation into a charge separation. The eukaryotic PSI reaction center is composed of at least 11 subunits.</text>
</comment>
<comment type="subcellular location">
    <subcellularLocation>
        <location evidence="1">Plastid</location>
        <location evidence="1">Chloroplast thylakoid membrane</location>
        <topology evidence="1">Multi-pass membrane protein</topology>
    </subcellularLocation>
</comment>
<comment type="similarity">
    <text evidence="1">Belongs to the PsaA/PsaB family.</text>
</comment>
<feature type="chain" id="PRO_0000088545" description="Photosystem I P700 chlorophyll a apoprotein A1">
    <location>
        <begin position="1" status="less than"/>
        <end position="717" status="greater than"/>
    </location>
</feature>
<feature type="transmembrane region" description="Helical; Name=I" evidence="1">
    <location>
        <begin position="58"/>
        <end position="81"/>
    </location>
</feature>
<feature type="transmembrane region" description="Helical; Name=II" evidence="1">
    <location>
        <begin position="144"/>
        <end position="167"/>
    </location>
</feature>
<feature type="transmembrane region" description="Helical; Name=III" evidence="1">
    <location>
        <begin position="183"/>
        <end position="207"/>
    </location>
</feature>
<feature type="transmembrane region" description="Helical; Name=IV" evidence="1">
    <location>
        <begin position="279"/>
        <end position="297"/>
    </location>
</feature>
<feature type="transmembrane region" description="Helical; Name=V" evidence="1">
    <location>
        <begin position="334"/>
        <end position="357"/>
    </location>
</feature>
<feature type="transmembrane region" description="Helical; Name=VI" evidence="1">
    <location>
        <begin position="373"/>
        <end position="399"/>
    </location>
</feature>
<feature type="transmembrane region" description="Helical; Name=VII" evidence="1">
    <location>
        <begin position="421"/>
        <end position="443"/>
    </location>
</feature>
<feature type="transmembrane region" description="Helical; Name=VIII" evidence="1">
    <location>
        <begin position="519"/>
        <end position="537"/>
    </location>
</feature>
<feature type="transmembrane region" description="Helical; Name=IX" evidence="1">
    <location>
        <begin position="577"/>
        <end position="598"/>
    </location>
</feature>
<feature type="transmembrane region" description="Helical; Name=X" evidence="1">
    <location>
        <begin position="652"/>
        <end position="674"/>
    </location>
</feature>
<feature type="transmembrane region" description="Helical; Name=XI" evidence="1">
    <location>
        <begin position="712"/>
        <end position="717" status="greater than"/>
    </location>
</feature>
<feature type="binding site" evidence="1">
    <location>
        <position position="561"/>
    </location>
    <ligand>
        <name>[4Fe-4S] cluster</name>
        <dbReference type="ChEBI" id="CHEBI:49883"/>
        <note>ligand shared between dimeric partners</note>
    </ligand>
</feature>
<feature type="binding site" evidence="1">
    <location>
        <position position="570"/>
    </location>
    <ligand>
        <name>[4Fe-4S] cluster</name>
        <dbReference type="ChEBI" id="CHEBI:49883"/>
        <note>ligand shared between dimeric partners</note>
    </ligand>
</feature>
<feature type="binding site" description="axial binding residue" evidence="1">
    <location>
        <position position="663"/>
    </location>
    <ligand>
        <name>chlorophyll a'</name>
        <dbReference type="ChEBI" id="CHEBI:189419"/>
        <label>A1</label>
    </ligand>
    <ligandPart>
        <name>Mg</name>
        <dbReference type="ChEBI" id="CHEBI:25107"/>
    </ligandPart>
</feature>
<feature type="binding site" description="axial binding residue" evidence="1">
    <location>
        <position position="671"/>
    </location>
    <ligand>
        <name>chlorophyll a</name>
        <dbReference type="ChEBI" id="CHEBI:58416"/>
        <label>A3</label>
    </ligand>
    <ligandPart>
        <name>Mg</name>
        <dbReference type="ChEBI" id="CHEBI:25107"/>
    </ligandPart>
</feature>
<feature type="binding site" evidence="1">
    <location>
        <position position="679"/>
    </location>
    <ligand>
        <name>chlorophyll a</name>
        <dbReference type="ChEBI" id="CHEBI:58416"/>
        <label>A3</label>
    </ligand>
</feature>
<feature type="binding site" evidence="1">
    <location>
        <position position="680"/>
    </location>
    <ligand>
        <name>phylloquinone</name>
        <dbReference type="ChEBI" id="CHEBI:18067"/>
        <label>A</label>
    </ligand>
</feature>
<feature type="non-terminal residue">
    <location>
        <position position="1"/>
    </location>
</feature>
<feature type="non-terminal residue">
    <location>
        <position position="717"/>
    </location>
</feature>
<gene>
    <name evidence="1" type="primary">psaA</name>
</gene>
<proteinExistence type="inferred from homology"/>
<dbReference type="EC" id="1.97.1.12" evidence="1"/>
<dbReference type="EMBL" id="AF180016">
    <property type="protein sequence ID" value="AAF29817.1"/>
    <property type="molecule type" value="Genomic_DNA"/>
</dbReference>
<dbReference type="SMR" id="Q9MUJ9"/>
<dbReference type="GO" id="GO:0009535">
    <property type="term" value="C:chloroplast thylakoid membrane"/>
    <property type="evidence" value="ECO:0007669"/>
    <property type="project" value="UniProtKB-SubCell"/>
</dbReference>
<dbReference type="GO" id="GO:0009522">
    <property type="term" value="C:photosystem I"/>
    <property type="evidence" value="ECO:0007669"/>
    <property type="project" value="UniProtKB-KW"/>
</dbReference>
<dbReference type="GO" id="GO:0051539">
    <property type="term" value="F:4 iron, 4 sulfur cluster binding"/>
    <property type="evidence" value="ECO:0007669"/>
    <property type="project" value="UniProtKB-KW"/>
</dbReference>
<dbReference type="GO" id="GO:0016168">
    <property type="term" value="F:chlorophyll binding"/>
    <property type="evidence" value="ECO:0007669"/>
    <property type="project" value="UniProtKB-KW"/>
</dbReference>
<dbReference type="GO" id="GO:0046872">
    <property type="term" value="F:metal ion binding"/>
    <property type="evidence" value="ECO:0007669"/>
    <property type="project" value="UniProtKB-KW"/>
</dbReference>
<dbReference type="GO" id="GO:0016491">
    <property type="term" value="F:oxidoreductase activity"/>
    <property type="evidence" value="ECO:0007669"/>
    <property type="project" value="UniProtKB-KW"/>
</dbReference>
<dbReference type="GO" id="GO:0015979">
    <property type="term" value="P:photosynthesis"/>
    <property type="evidence" value="ECO:0007669"/>
    <property type="project" value="UniProtKB-KW"/>
</dbReference>
<dbReference type="FunFam" id="1.20.1130.10:FF:000001">
    <property type="entry name" value="Photosystem I P700 chlorophyll a apoprotein A2"/>
    <property type="match status" value="1"/>
</dbReference>
<dbReference type="Gene3D" id="1.20.1130.10">
    <property type="entry name" value="Photosystem I PsaA/PsaB"/>
    <property type="match status" value="1"/>
</dbReference>
<dbReference type="HAMAP" id="MF_00458">
    <property type="entry name" value="PSI_PsaA"/>
    <property type="match status" value="1"/>
</dbReference>
<dbReference type="InterPro" id="IPR006243">
    <property type="entry name" value="PSI_PsaA"/>
</dbReference>
<dbReference type="InterPro" id="IPR001280">
    <property type="entry name" value="PSI_PsaA/B"/>
</dbReference>
<dbReference type="InterPro" id="IPR020586">
    <property type="entry name" value="PSI_PsaA/B_CS"/>
</dbReference>
<dbReference type="InterPro" id="IPR036408">
    <property type="entry name" value="PSI_PsaA/B_sf"/>
</dbReference>
<dbReference type="NCBIfam" id="TIGR01335">
    <property type="entry name" value="psaA"/>
    <property type="match status" value="1"/>
</dbReference>
<dbReference type="PANTHER" id="PTHR30128">
    <property type="entry name" value="OUTER MEMBRANE PROTEIN, OMPA-RELATED"/>
    <property type="match status" value="1"/>
</dbReference>
<dbReference type="PANTHER" id="PTHR30128:SF19">
    <property type="entry name" value="PHOTOSYSTEM I P700 CHLOROPHYLL A APOPROTEIN A1-RELATED"/>
    <property type="match status" value="1"/>
</dbReference>
<dbReference type="Pfam" id="PF00223">
    <property type="entry name" value="PsaA_PsaB"/>
    <property type="match status" value="1"/>
</dbReference>
<dbReference type="PIRSF" id="PIRSF002905">
    <property type="entry name" value="PSI_A"/>
    <property type="match status" value="1"/>
</dbReference>
<dbReference type="PRINTS" id="PR00257">
    <property type="entry name" value="PHOTSYSPSAAB"/>
</dbReference>
<dbReference type="SUPFAM" id="SSF81558">
    <property type="entry name" value="Photosystem I subunits PsaA/PsaB"/>
    <property type="match status" value="1"/>
</dbReference>
<dbReference type="PROSITE" id="PS00419">
    <property type="entry name" value="PHOTOSYSTEM_I_PSAAB"/>
    <property type="match status" value="1"/>
</dbReference>
<protein>
    <recommendedName>
        <fullName evidence="1">Photosystem I P700 chlorophyll a apoprotein A1</fullName>
        <ecNumber evidence="1">1.97.1.12</ecNumber>
    </recommendedName>
    <alternativeName>
        <fullName evidence="1">PSI-A</fullName>
    </alternativeName>
    <alternativeName>
        <fullName evidence="1">PsaA</fullName>
    </alternativeName>
</protein>
<organism>
    <name type="scientific">Drimys winteri</name>
    <name type="common">Winter's bark</name>
    <name type="synonym">Drimys chilensis</name>
    <dbReference type="NCBI Taxonomy" id="3419"/>
    <lineage>
        <taxon>Eukaryota</taxon>
        <taxon>Viridiplantae</taxon>
        <taxon>Streptophyta</taxon>
        <taxon>Embryophyta</taxon>
        <taxon>Tracheophyta</taxon>
        <taxon>Spermatophyta</taxon>
        <taxon>Magnoliopsida</taxon>
        <taxon>Magnoliidae</taxon>
        <taxon>Canellales</taxon>
        <taxon>Winteraceae</taxon>
        <taxon>Drimys</taxon>
    </lineage>
</organism>
<reference key="1">
    <citation type="journal article" date="2000" name="Mol. Biol. Evol.">
        <title>Error, bias, and long-branch attraction in data for two chloroplast photosystem genes in seed plants.</title>
        <authorList>
            <person name="Sanderson M.J."/>
            <person name="Wojciechowski M.F."/>
            <person name="Hu J.-M."/>
            <person name="Sher Khan T."/>
            <person name="Brady S.G."/>
        </authorList>
    </citation>
    <scope>NUCLEOTIDE SEQUENCE [GENOMIC DNA]</scope>
</reference>
<sequence>LVDRDPVKTSFEEWARPGHFSRTIAKGPETTTWIWNLHADAHDFDSHTSDLEEISRKVFSAHFGQLSIIFLWLSGMYFHGARFSNYEAWLSDPTHIGPSAQVVWPIVGQEILNGDVGGGFRGIQITSGFFQIWRASGITSELQLYCTAIGALVFAGLMLFAGWFHYHKAAPKLAWFQDVESMLNHHLAGLLGLGSLSWAGHQVHVSLPINQFLDAGVDPKEIPLPHEFILNRDLLAQLYPSFAEGATPFFTLNWSKYAEFLTFRGGLDPVTGGLWLTDIAHHHLAIAILFLIAGHMYRTNWGIGHGLKDILEAHKGPFTGQGHKGLYEILTTSWHAQLSLNLAMLGSLTIVVAHHMYSMPPYPYLAIDYGTQLSLFTHHMWIGGFLIVGAAAHAAIFMVRDYDPTTRYNDLLDRVLRHRDAIISHLNWACIFLGFHSFGLYIHNDTMSALGRPQDMFSDTAIQLQPIFAQWVQNTHALAPGATAPGATTSTSLTWGGGDLIAVGGKVALLPIPLGTADFLVHHIHAFTIHVTVLILLKGVLFARSSRLIPDKANLGFRFPCDGPGRGGTCQVSAWDHVFLGLFWMYNAISVVIFHFSWKMQSDVWGSISDQGVVTHITGGNFAQSSITINGWLRDFLWAQASQVIQSYGSSLSAYGLFFLGAHFVWAFSLMFLFSGRGYWQELIESIVWAHNKLKVAPATQPRALSIVQGRAVGVTH</sequence>
<name>PSAA_DRIWI</name>
<evidence type="ECO:0000255" key="1">
    <source>
        <dbReference type="HAMAP-Rule" id="MF_00458"/>
    </source>
</evidence>
<keyword id="KW-0004">4Fe-4S</keyword>
<keyword id="KW-0148">Chlorophyll</keyword>
<keyword id="KW-0150">Chloroplast</keyword>
<keyword id="KW-0157">Chromophore</keyword>
<keyword id="KW-0249">Electron transport</keyword>
<keyword id="KW-0408">Iron</keyword>
<keyword id="KW-0411">Iron-sulfur</keyword>
<keyword id="KW-0460">Magnesium</keyword>
<keyword id="KW-0472">Membrane</keyword>
<keyword id="KW-0479">Metal-binding</keyword>
<keyword id="KW-0560">Oxidoreductase</keyword>
<keyword id="KW-0602">Photosynthesis</keyword>
<keyword id="KW-0603">Photosystem I</keyword>
<keyword id="KW-0934">Plastid</keyword>
<keyword id="KW-0793">Thylakoid</keyword>
<keyword id="KW-0812">Transmembrane</keyword>
<keyword id="KW-1133">Transmembrane helix</keyword>
<keyword id="KW-0813">Transport</keyword>